<sequence>MSLADSVLAVNNDLPIRTDSPVHSGKVRSVYWLTDADSRRLIKTKGYNVPEDTPLAIMVISDRISAFDCIFHGEGGLKGIPGKGAALNAISNHWFKLFAENGLADSHILDIPHPFVWIVQKARPIKVEAICRQYITGSMWRAYSKGERVFCGITLPEGLEKDQKLPDLLITPSTKGILTGIPGVPAQDDVNISRSDIEANYQAFGFEKLEDIDLYEKLLKDGFKVISKALADIDQVFVDTKFEFGYVTDKDGNSKLIYMDEVGTPDSSRIWDGAAYRDGKILENSKEGFRQFLLNHFPDPDVLLNKDRMPEREALARDNDLPLEAMMQVSRTYTGVAEKVTGAAIPLPANPKADIIKILREEYDLIL</sequence>
<accession>A4Y307</accession>
<gene>
    <name evidence="1" type="primary">purC</name>
    <name type="ordered locus">Sputcn32_0608</name>
</gene>
<protein>
    <recommendedName>
        <fullName evidence="1">Phosphoribosylaminoimidazole-succinocarboxamide synthase</fullName>
        <ecNumber evidence="1">6.3.2.6</ecNumber>
    </recommendedName>
    <alternativeName>
        <fullName evidence="1">SAICAR synthetase</fullName>
    </alternativeName>
</protein>
<dbReference type="EC" id="6.3.2.6" evidence="1"/>
<dbReference type="EMBL" id="CP000681">
    <property type="protein sequence ID" value="ABP74340.1"/>
    <property type="molecule type" value="Genomic_DNA"/>
</dbReference>
<dbReference type="SMR" id="A4Y307"/>
<dbReference type="STRING" id="319224.Sputcn32_0608"/>
<dbReference type="KEGG" id="spc:Sputcn32_0608"/>
<dbReference type="eggNOG" id="COG0152">
    <property type="taxonomic scope" value="Bacteria"/>
</dbReference>
<dbReference type="HOGENOM" id="CLU_064197_0_0_6"/>
<dbReference type="UniPathway" id="UPA00074">
    <property type="reaction ID" value="UER00131"/>
</dbReference>
<dbReference type="GO" id="GO:0005737">
    <property type="term" value="C:cytoplasm"/>
    <property type="evidence" value="ECO:0007669"/>
    <property type="project" value="TreeGrafter"/>
</dbReference>
<dbReference type="GO" id="GO:0005524">
    <property type="term" value="F:ATP binding"/>
    <property type="evidence" value="ECO:0007669"/>
    <property type="project" value="UniProtKB-KW"/>
</dbReference>
<dbReference type="GO" id="GO:0004639">
    <property type="term" value="F:phosphoribosylaminoimidazolesuccinocarboxamide synthase activity"/>
    <property type="evidence" value="ECO:0007669"/>
    <property type="project" value="UniProtKB-UniRule"/>
</dbReference>
<dbReference type="GO" id="GO:0006189">
    <property type="term" value="P:'de novo' IMP biosynthetic process"/>
    <property type="evidence" value="ECO:0007669"/>
    <property type="project" value="UniProtKB-UniRule"/>
</dbReference>
<dbReference type="CDD" id="cd01414">
    <property type="entry name" value="SAICAR_synt_Sc"/>
    <property type="match status" value="1"/>
</dbReference>
<dbReference type="FunFam" id="3.30.200.20:FF:000597">
    <property type="entry name" value="Phosphoribosylaminoimidazole-succinocarboxamide synthase"/>
    <property type="match status" value="1"/>
</dbReference>
<dbReference type="FunFam" id="3.30.470.20:FF:000067">
    <property type="entry name" value="Phosphoribosylaminoimidazole-succinocarboxamide synthase"/>
    <property type="match status" value="1"/>
</dbReference>
<dbReference type="Gene3D" id="3.30.470.20">
    <property type="entry name" value="ATP-grasp fold, B domain"/>
    <property type="match status" value="1"/>
</dbReference>
<dbReference type="Gene3D" id="3.30.200.20">
    <property type="entry name" value="Phosphorylase Kinase, domain 1"/>
    <property type="match status" value="1"/>
</dbReference>
<dbReference type="HAMAP" id="MF_00137">
    <property type="entry name" value="SAICAR_synth"/>
    <property type="match status" value="1"/>
</dbReference>
<dbReference type="InterPro" id="IPR028923">
    <property type="entry name" value="SAICAR_synt/ADE2_N"/>
</dbReference>
<dbReference type="InterPro" id="IPR014106">
    <property type="entry name" value="SAICAR_synthase_Vibrio-typ"/>
</dbReference>
<dbReference type="InterPro" id="IPR018236">
    <property type="entry name" value="SAICAR_synthetase_CS"/>
</dbReference>
<dbReference type="NCBIfam" id="NF010567">
    <property type="entry name" value="PRK13960.1"/>
    <property type="match status" value="1"/>
</dbReference>
<dbReference type="NCBIfam" id="TIGR02735">
    <property type="entry name" value="purC_vibrio"/>
    <property type="match status" value="1"/>
</dbReference>
<dbReference type="PANTHER" id="PTHR43700">
    <property type="entry name" value="PHOSPHORIBOSYLAMINOIMIDAZOLE-SUCCINOCARBOXAMIDE SYNTHASE"/>
    <property type="match status" value="1"/>
</dbReference>
<dbReference type="PANTHER" id="PTHR43700:SF1">
    <property type="entry name" value="PHOSPHORIBOSYLAMINOIMIDAZOLE-SUCCINOCARBOXAMIDE SYNTHASE"/>
    <property type="match status" value="1"/>
</dbReference>
<dbReference type="Pfam" id="PF01259">
    <property type="entry name" value="SAICAR_synt"/>
    <property type="match status" value="1"/>
</dbReference>
<dbReference type="SUPFAM" id="SSF56104">
    <property type="entry name" value="SAICAR synthase-like"/>
    <property type="match status" value="1"/>
</dbReference>
<dbReference type="PROSITE" id="PS01057">
    <property type="entry name" value="SAICAR_SYNTHETASE_1"/>
    <property type="match status" value="1"/>
</dbReference>
<organism>
    <name type="scientific">Shewanella putrefaciens (strain CN-32 / ATCC BAA-453)</name>
    <dbReference type="NCBI Taxonomy" id="319224"/>
    <lineage>
        <taxon>Bacteria</taxon>
        <taxon>Pseudomonadati</taxon>
        <taxon>Pseudomonadota</taxon>
        <taxon>Gammaproteobacteria</taxon>
        <taxon>Alteromonadales</taxon>
        <taxon>Shewanellaceae</taxon>
        <taxon>Shewanella</taxon>
    </lineage>
</organism>
<feature type="chain" id="PRO_1000117851" description="Phosphoribosylaminoimidazole-succinocarboxamide synthase">
    <location>
        <begin position="1"/>
        <end position="367"/>
    </location>
</feature>
<name>PUR7_SHEPC</name>
<comment type="catalytic activity">
    <reaction evidence="1">
        <text>5-amino-1-(5-phospho-D-ribosyl)imidazole-4-carboxylate + L-aspartate + ATP = (2S)-2-[5-amino-1-(5-phospho-beta-D-ribosyl)imidazole-4-carboxamido]succinate + ADP + phosphate + 2 H(+)</text>
        <dbReference type="Rhea" id="RHEA:22628"/>
        <dbReference type="ChEBI" id="CHEBI:15378"/>
        <dbReference type="ChEBI" id="CHEBI:29991"/>
        <dbReference type="ChEBI" id="CHEBI:30616"/>
        <dbReference type="ChEBI" id="CHEBI:43474"/>
        <dbReference type="ChEBI" id="CHEBI:58443"/>
        <dbReference type="ChEBI" id="CHEBI:77657"/>
        <dbReference type="ChEBI" id="CHEBI:456216"/>
        <dbReference type="EC" id="6.3.2.6"/>
    </reaction>
</comment>
<comment type="pathway">
    <text evidence="1">Purine metabolism; IMP biosynthesis via de novo pathway; 5-amino-1-(5-phospho-D-ribosyl)imidazole-4-carboxamide from 5-amino-1-(5-phospho-D-ribosyl)imidazole-4-carboxylate: step 1/2.</text>
</comment>
<comment type="similarity">
    <text evidence="1">Belongs to the SAICAR synthetase family.</text>
</comment>
<proteinExistence type="inferred from homology"/>
<evidence type="ECO:0000255" key="1">
    <source>
        <dbReference type="HAMAP-Rule" id="MF_00137"/>
    </source>
</evidence>
<keyword id="KW-0067">ATP-binding</keyword>
<keyword id="KW-0436">Ligase</keyword>
<keyword id="KW-0547">Nucleotide-binding</keyword>
<keyword id="KW-0658">Purine biosynthesis</keyword>
<reference key="1">
    <citation type="submission" date="2007-04" db="EMBL/GenBank/DDBJ databases">
        <title>Complete sequence of Shewanella putrefaciens CN-32.</title>
        <authorList>
            <consortium name="US DOE Joint Genome Institute"/>
            <person name="Copeland A."/>
            <person name="Lucas S."/>
            <person name="Lapidus A."/>
            <person name="Barry K."/>
            <person name="Detter J.C."/>
            <person name="Glavina del Rio T."/>
            <person name="Hammon N."/>
            <person name="Israni S."/>
            <person name="Dalin E."/>
            <person name="Tice H."/>
            <person name="Pitluck S."/>
            <person name="Chain P."/>
            <person name="Malfatti S."/>
            <person name="Shin M."/>
            <person name="Vergez L."/>
            <person name="Schmutz J."/>
            <person name="Larimer F."/>
            <person name="Land M."/>
            <person name="Hauser L."/>
            <person name="Kyrpides N."/>
            <person name="Mikhailova N."/>
            <person name="Romine M.F."/>
            <person name="Fredrickson J."/>
            <person name="Tiedje J."/>
            <person name="Richardson P."/>
        </authorList>
    </citation>
    <scope>NUCLEOTIDE SEQUENCE [LARGE SCALE GENOMIC DNA]</scope>
    <source>
        <strain>CN-32 / ATCC BAA-453</strain>
    </source>
</reference>